<comment type="similarity">
    <text evidence="1">Belongs to the UPF0473 family.</text>
</comment>
<protein>
    <recommendedName>
        <fullName evidence="1">UPF0473 protein BCE33L4129</fullName>
    </recommendedName>
</protein>
<dbReference type="EMBL" id="CP000001">
    <property type="protein sequence ID" value="AAU16140.1"/>
    <property type="molecule type" value="Genomic_DNA"/>
</dbReference>
<dbReference type="RefSeq" id="WP_000392247.1">
    <property type="nucleotide sequence ID" value="NZ_CP009968.1"/>
</dbReference>
<dbReference type="KEGG" id="bcz:BCE33L4129"/>
<dbReference type="PATRIC" id="fig|288681.22.peg.1255"/>
<dbReference type="Proteomes" id="UP000002612">
    <property type="component" value="Chromosome"/>
</dbReference>
<dbReference type="HAMAP" id="MF_01448">
    <property type="entry name" value="UPF0473"/>
    <property type="match status" value="1"/>
</dbReference>
<dbReference type="InterPro" id="IPR009711">
    <property type="entry name" value="UPF0473"/>
</dbReference>
<dbReference type="NCBIfam" id="NF010216">
    <property type="entry name" value="PRK13678.1-3"/>
    <property type="match status" value="1"/>
</dbReference>
<dbReference type="PANTHER" id="PTHR40066">
    <property type="entry name" value="UPF0473 PROTEIN CBO2561/CLC_2432"/>
    <property type="match status" value="1"/>
</dbReference>
<dbReference type="PANTHER" id="PTHR40066:SF1">
    <property type="entry name" value="UPF0473 PROTEIN CBO2561_CLC_2432"/>
    <property type="match status" value="1"/>
</dbReference>
<dbReference type="Pfam" id="PF06949">
    <property type="entry name" value="DUF1292"/>
    <property type="match status" value="1"/>
</dbReference>
<accession>Q634F9</accession>
<reference key="1">
    <citation type="journal article" date="2006" name="J. Bacteriol.">
        <title>Pathogenomic sequence analysis of Bacillus cereus and Bacillus thuringiensis isolates closely related to Bacillus anthracis.</title>
        <authorList>
            <person name="Han C.S."/>
            <person name="Xie G."/>
            <person name="Challacombe J.F."/>
            <person name="Altherr M.R."/>
            <person name="Bhotika S.S."/>
            <person name="Bruce D."/>
            <person name="Campbell C.S."/>
            <person name="Campbell M.L."/>
            <person name="Chen J."/>
            <person name="Chertkov O."/>
            <person name="Cleland C."/>
            <person name="Dimitrijevic M."/>
            <person name="Doggett N.A."/>
            <person name="Fawcett J.J."/>
            <person name="Glavina T."/>
            <person name="Goodwin L.A."/>
            <person name="Hill K.K."/>
            <person name="Hitchcock P."/>
            <person name="Jackson P.J."/>
            <person name="Keim P."/>
            <person name="Kewalramani A.R."/>
            <person name="Longmire J."/>
            <person name="Lucas S."/>
            <person name="Malfatti S."/>
            <person name="McMurry K."/>
            <person name="Meincke L.J."/>
            <person name="Misra M."/>
            <person name="Moseman B.L."/>
            <person name="Mundt M."/>
            <person name="Munk A.C."/>
            <person name="Okinaka R.T."/>
            <person name="Parson-Quintana B."/>
            <person name="Reilly L.P."/>
            <person name="Richardson P."/>
            <person name="Robinson D.L."/>
            <person name="Rubin E."/>
            <person name="Saunders E."/>
            <person name="Tapia R."/>
            <person name="Tesmer J.G."/>
            <person name="Thayer N."/>
            <person name="Thompson L.S."/>
            <person name="Tice H."/>
            <person name="Ticknor L.O."/>
            <person name="Wills P.L."/>
            <person name="Brettin T.S."/>
            <person name="Gilna P."/>
        </authorList>
    </citation>
    <scope>NUCLEOTIDE SEQUENCE [LARGE SCALE GENOMIC DNA]</scope>
    <source>
        <strain>ZK / E33L</strain>
    </source>
</reference>
<sequence>MEENQITIVDEKGNEHLCEIIFTFDAEKFGKKSYVVFSPIGEVDEDGDQIYDAMAYEQNEEEGGTLLPIESEEEWEMVQEMFNTLADEQEAE</sequence>
<organism>
    <name type="scientific">Bacillus cereus (strain ZK / E33L)</name>
    <dbReference type="NCBI Taxonomy" id="288681"/>
    <lineage>
        <taxon>Bacteria</taxon>
        <taxon>Bacillati</taxon>
        <taxon>Bacillota</taxon>
        <taxon>Bacilli</taxon>
        <taxon>Bacillales</taxon>
        <taxon>Bacillaceae</taxon>
        <taxon>Bacillus</taxon>
        <taxon>Bacillus cereus group</taxon>
    </lineage>
</organism>
<feature type="chain" id="PRO_0000304815" description="UPF0473 protein BCE33L4129">
    <location>
        <begin position="1"/>
        <end position="92"/>
    </location>
</feature>
<name>Y4129_BACCZ</name>
<evidence type="ECO:0000255" key="1">
    <source>
        <dbReference type="HAMAP-Rule" id="MF_01448"/>
    </source>
</evidence>
<proteinExistence type="inferred from homology"/>
<gene>
    <name type="ordered locus">BCE33L4129</name>
</gene>